<comment type="function">
    <text evidence="1">Probably acts as a transcriptional activator. Binds to the GCC-box pathogenesis-related promoter element. May be involved in the regulation of gene expression by stress factors and by components of stress signal transduction pathways (By similarity).</text>
</comment>
<comment type="subcellular location">
    <subcellularLocation>
        <location evidence="3">Nucleus</location>
    </subcellularLocation>
</comment>
<comment type="similarity">
    <text evidence="3">Belongs to the AP2/ERF transcription factor family. ERF subfamily.</text>
</comment>
<reference key="1">
    <citation type="submission" date="2004-02" db="EMBL/GenBank/DDBJ databases">
        <title>Molecular cloning, expression, phylogenetic and functional characterization of the Arabidopsis AP2/EREBP transcription factor family.</title>
        <authorList>
            <person name="Pan Y."/>
            <person name="Gong W."/>
            <person name="Liu D."/>
            <person name="Fu Q."/>
            <person name="Mei W.-Q."/>
            <person name="Song W.-Q."/>
            <person name="Ma L.-G."/>
            <person name="Luo J.-C."/>
            <person name="Deng X.-W."/>
            <person name="Zhu Y.-X."/>
        </authorList>
    </citation>
    <scope>NUCLEOTIDE SEQUENCE [MRNA]</scope>
</reference>
<reference key="2">
    <citation type="journal article" date="2000" name="Nature">
        <title>Sequence and analysis of chromosome 1 of the plant Arabidopsis thaliana.</title>
        <authorList>
            <person name="Theologis A."/>
            <person name="Ecker J.R."/>
            <person name="Palm C.J."/>
            <person name="Federspiel N.A."/>
            <person name="Kaul S."/>
            <person name="White O."/>
            <person name="Alonso J."/>
            <person name="Altafi H."/>
            <person name="Araujo R."/>
            <person name="Bowman C.L."/>
            <person name="Brooks S.Y."/>
            <person name="Buehler E."/>
            <person name="Chan A."/>
            <person name="Chao Q."/>
            <person name="Chen H."/>
            <person name="Cheuk R.F."/>
            <person name="Chin C.W."/>
            <person name="Chung M.K."/>
            <person name="Conn L."/>
            <person name="Conway A.B."/>
            <person name="Conway A.R."/>
            <person name="Creasy T.H."/>
            <person name="Dewar K."/>
            <person name="Dunn P."/>
            <person name="Etgu P."/>
            <person name="Feldblyum T.V."/>
            <person name="Feng J.-D."/>
            <person name="Fong B."/>
            <person name="Fujii C.Y."/>
            <person name="Gill J.E."/>
            <person name="Goldsmith A.D."/>
            <person name="Haas B."/>
            <person name="Hansen N.F."/>
            <person name="Hughes B."/>
            <person name="Huizar L."/>
            <person name="Hunter J.L."/>
            <person name="Jenkins J."/>
            <person name="Johnson-Hopson C."/>
            <person name="Khan S."/>
            <person name="Khaykin E."/>
            <person name="Kim C.J."/>
            <person name="Koo H.L."/>
            <person name="Kremenetskaia I."/>
            <person name="Kurtz D.B."/>
            <person name="Kwan A."/>
            <person name="Lam B."/>
            <person name="Langin-Hooper S."/>
            <person name="Lee A."/>
            <person name="Lee J.M."/>
            <person name="Lenz C.A."/>
            <person name="Li J.H."/>
            <person name="Li Y.-P."/>
            <person name="Lin X."/>
            <person name="Liu S.X."/>
            <person name="Liu Z.A."/>
            <person name="Luros J.S."/>
            <person name="Maiti R."/>
            <person name="Marziali A."/>
            <person name="Militscher J."/>
            <person name="Miranda M."/>
            <person name="Nguyen M."/>
            <person name="Nierman W.C."/>
            <person name="Osborne B.I."/>
            <person name="Pai G."/>
            <person name="Peterson J."/>
            <person name="Pham P.K."/>
            <person name="Rizzo M."/>
            <person name="Rooney T."/>
            <person name="Rowley D."/>
            <person name="Sakano H."/>
            <person name="Salzberg S.L."/>
            <person name="Schwartz J.R."/>
            <person name="Shinn P."/>
            <person name="Southwick A.M."/>
            <person name="Sun H."/>
            <person name="Tallon L.J."/>
            <person name="Tambunga G."/>
            <person name="Toriumi M.J."/>
            <person name="Town C.D."/>
            <person name="Utterback T."/>
            <person name="Van Aken S."/>
            <person name="Vaysberg M."/>
            <person name="Vysotskaia V.S."/>
            <person name="Walker M."/>
            <person name="Wu D."/>
            <person name="Yu G."/>
            <person name="Fraser C.M."/>
            <person name="Venter J.C."/>
            <person name="Davis R.W."/>
        </authorList>
    </citation>
    <scope>NUCLEOTIDE SEQUENCE [LARGE SCALE GENOMIC DNA]</scope>
    <source>
        <strain>cv. Columbia</strain>
    </source>
</reference>
<reference key="3">
    <citation type="journal article" date="2017" name="Plant J.">
        <title>Araport11: a complete reannotation of the Arabidopsis thaliana reference genome.</title>
        <authorList>
            <person name="Cheng C.Y."/>
            <person name="Krishnakumar V."/>
            <person name="Chan A.P."/>
            <person name="Thibaud-Nissen F."/>
            <person name="Schobel S."/>
            <person name="Town C.D."/>
        </authorList>
    </citation>
    <scope>GENOME REANNOTATION</scope>
    <source>
        <strain>cv. Columbia</strain>
    </source>
</reference>
<reference key="4">
    <citation type="submission" date="2005-02" db="EMBL/GenBank/DDBJ databases">
        <title>Arabidopsis ORF clones.</title>
        <authorList>
            <person name="Kim C.J."/>
            <person name="Chen H."/>
            <person name="Cheuk R.F."/>
            <person name="Shinn P."/>
            <person name="Ecker J.R."/>
        </authorList>
    </citation>
    <scope>NUCLEOTIDE SEQUENCE [LARGE SCALE MRNA]</scope>
    <source>
        <strain>cv. Columbia</strain>
    </source>
</reference>
<reference key="5">
    <citation type="journal article" date="2006" name="Plant Physiol.">
        <title>Genome-wide analysis of the ERF gene family in Arabidopsis and rice.</title>
        <authorList>
            <person name="Nakano T."/>
            <person name="Suzuki K."/>
            <person name="Fujimura T."/>
            <person name="Shinshi H."/>
        </authorList>
    </citation>
    <scope>GENE FAMILY</scope>
    <scope>NOMENCLATURE</scope>
</reference>
<name>ERF22_ARATH</name>
<feature type="chain" id="PRO_0000290382" description="Ethylene-responsive transcription factor ERF022">
    <location>
        <begin position="1"/>
        <end position="184"/>
    </location>
</feature>
<feature type="DNA-binding region" description="AP2/ERF" evidence="2">
    <location>
        <begin position="19"/>
        <end position="76"/>
    </location>
</feature>
<keyword id="KW-0010">Activator</keyword>
<keyword id="KW-0238">DNA-binding</keyword>
<keyword id="KW-0936">Ethylene signaling pathway</keyword>
<keyword id="KW-0539">Nucleus</keyword>
<keyword id="KW-1185">Reference proteome</keyword>
<keyword id="KW-0804">Transcription</keyword>
<keyword id="KW-0805">Transcription regulation</keyword>
<gene>
    <name type="primary">ERF022</name>
    <name type="ordered locus">At1g33760</name>
    <name type="ORF">F14M2.12</name>
</gene>
<proteinExistence type="evidence at transcript level"/>
<sequence>MENTYVGQRDYRFNVNQLSYRGIRRRKWGKWVSEIREPGKKTRIWLGSYETAEMAAAAYDAAALHLRGRGTNLNFPELVDSFPRPESSSSEHIQAAAQDAALMFKPGRLSEPALESGQGLSRVGLSPDQIQAINESPLDSPRMGWMQDLEVADYEELYGQFFGQHDRDEFFEMQQFQSIWNSNN</sequence>
<organism>
    <name type="scientific">Arabidopsis thaliana</name>
    <name type="common">Mouse-ear cress</name>
    <dbReference type="NCBI Taxonomy" id="3702"/>
    <lineage>
        <taxon>Eukaryota</taxon>
        <taxon>Viridiplantae</taxon>
        <taxon>Streptophyta</taxon>
        <taxon>Embryophyta</taxon>
        <taxon>Tracheophyta</taxon>
        <taxon>Spermatophyta</taxon>
        <taxon>Magnoliopsida</taxon>
        <taxon>eudicotyledons</taxon>
        <taxon>Gunneridae</taxon>
        <taxon>Pentapetalae</taxon>
        <taxon>rosids</taxon>
        <taxon>malvids</taxon>
        <taxon>Brassicales</taxon>
        <taxon>Brassicaceae</taxon>
        <taxon>Camelineae</taxon>
        <taxon>Arabidopsis</taxon>
    </lineage>
</organism>
<accession>Q9LQ28</accession>
<evidence type="ECO:0000250" key="1"/>
<evidence type="ECO:0000255" key="2">
    <source>
        <dbReference type="PROSITE-ProRule" id="PRU00366"/>
    </source>
</evidence>
<evidence type="ECO:0000305" key="3"/>
<protein>
    <recommendedName>
        <fullName>Ethylene-responsive transcription factor ERF022</fullName>
    </recommendedName>
</protein>
<dbReference type="EMBL" id="AY560838">
    <property type="protein sequence ID" value="AAT44905.1"/>
    <property type="molecule type" value="mRNA"/>
</dbReference>
<dbReference type="EMBL" id="AC010164">
    <property type="protein sequence ID" value="AAF97285.1"/>
    <property type="molecule type" value="Genomic_DNA"/>
</dbReference>
<dbReference type="EMBL" id="CP002684">
    <property type="protein sequence ID" value="AEE31621.1"/>
    <property type="molecule type" value="Genomic_DNA"/>
</dbReference>
<dbReference type="EMBL" id="BT015928">
    <property type="protein sequence ID" value="AAV31158.1"/>
    <property type="molecule type" value="mRNA"/>
</dbReference>
<dbReference type="EMBL" id="BT020566">
    <property type="protein sequence ID" value="AAW78585.1"/>
    <property type="molecule type" value="mRNA"/>
</dbReference>
<dbReference type="PIR" id="A86461">
    <property type="entry name" value="A86461"/>
</dbReference>
<dbReference type="RefSeq" id="NP_174636.1">
    <property type="nucleotide sequence ID" value="NM_103095.4"/>
</dbReference>
<dbReference type="SMR" id="Q9LQ28"/>
<dbReference type="BioGRID" id="25499">
    <property type="interactions" value="16"/>
</dbReference>
<dbReference type="FunCoup" id="Q9LQ28">
    <property type="interactions" value="18"/>
</dbReference>
<dbReference type="IntAct" id="Q9LQ28">
    <property type="interactions" value="16"/>
</dbReference>
<dbReference type="STRING" id="3702.Q9LQ28"/>
<dbReference type="PaxDb" id="3702-AT1G33760.1"/>
<dbReference type="EnsemblPlants" id="AT1G33760.1">
    <property type="protein sequence ID" value="AT1G33760.1"/>
    <property type="gene ID" value="AT1G33760"/>
</dbReference>
<dbReference type="GeneID" id="840267"/>
<dbReference type="Gramene" id="AT1G33760.1">
    <property type="protein sequence ID" value="AT1G33760.1"/>
    <property type="gene ID" value="AT1G33760"/>
</dbReference>
<dbReference type="KEGG" id="ath:AT1G33760"/>
<dbReference type="Araport" id="AT1G33760"/>
<dbReference type="TAIR" id="AT1G33760">
    <property type="gene designation" value="ERF022"/>
</dbReference>
<dbReference type="eggNOG" id="ENOG502RZXH">
    <property type="taxonomic scope" value="Eukaryota"/>
</dbReference>
<dbReference type="HOGENOM" id="CLU_063331_1_1_1"/>
<dbReference type="InParanoid" id="Q9LQ28"/>
<dbReference type="OMA" id="AFHLKGH"/>
<dbReference type="OrthoDB" id="688329at2759"/>
<dbReference type="PhylomeDB" id="Q9LQ28"/>
<dbReference type="PRO" id="PR:Q9LQ28"/>
<dbReference type="Proteomes" id="UP000006548">
    <property type="component" value="Chromosome 1"/>
</dbReference>
<dbReference type="ExpressionAtlas" id="Q9LQ28">
    <property type="expression patterns" value="baseline and differential"/>
</dbReference>
<dbReference type="GO" id="GO:0005634">
    <property type="term" value="C:nucleus"/>
    <property type="evidence" value="ECO:0007669"/>
    <property type="project" value="UniProtKB-SubCell"/>
</dbReference>
<dbReference type="GO" id="GO:0003677">
    <property type="term" value="F:DNA binding"/>
    <property type="evidence" value="ECO:0007669"/>
    <property type="project" value="UniProtKB-KW"/>
</dbReference>
<dbReference type="GO" id="GO:0003700">
    <property type="term" value="F:DNA-binding transcription factor activity"/>
    <property type="evidence" value="ECO:0000250"/>
    <property type="project" value="TAIR"/>
</dbReference>
<dbReference type="GO" id="GO:0009873">
    <property type="term" value="P:ethylene-activated signaling pathway"/>
    <property type="evidence" value="ECO:0007669"/>
    <property type="project" value="UniProtKB-KW"/>
</dbReference>
<dbReference type="CDD" id="cd00018">
    <property type="entry name" value="AP2"/>
    <property type="match status" value="1"/>
</dbReference>
<dbReference type="FunFam" id="3.30.730.10:FF:000001">
    <property type="entry name" value="Ethylene-responsive transcription factor 2"/>
    <property type="match status" value="1"/>
</dbReference>
<dbReference type="Gene3D" id="3.30.730.10">
    <property type="entry name" value="AP2/ERF domain"/>
    <property type="match status" value="1"/>
</dbReference>
<dbReference type="InterPro" id="IPR001471">
    <property type="entry name" value="AP2/ERF_dom"/>
</dbReference>
<dbReference type="InterPro" id="IPR036955">
    <property type="entry name" value="AP2/ERF_dom_sf"/>
</dbReference>
<dbReference type="InterPro" id="IPR051032">
    <property type="entry name" value="AP2/ERF_TF_ERF_subfamily"/>
</dbReference>
<dbReference type="InterPro" id="IPR016177">
    <property type="entry name" value="DNA-bd_dom_sf"/>
</dbReference>
<dbReference type="PANTHER" id="PTHR31985:SF100">
    <property type="entry name" value="ETHYLENE-RESPONSIVE TRANSCRIPTION FACTOR ERF022"/>
    <property type="match status" value="1"/>
</dbReference>
<dbReference type="PANTHER" id="PTHR31985">
    <property type="entry name" value="ETHYLENE-RESPONSIVE TRANSCRIPTION FACTOR ERF042-RELATED"/>
    <property type="match status" value="1"/>
</dbReference>
<dbReference type="Pfam" id="PF00847">
    <property type="entry name" value="AP2"/>
    <property type="match status" value="1"/>
</dbReference>
<dbReference type="PRINTS" id="PR00367">
    <property type="entry name" value="ETHRSPELEMNT"/>
</dbReference>
<dbReference type="SMART" id="SM00380">
    <property type="entry name" value="AP2"/>
    <property type="match status" value="1"/>
</dbReference>
<dbReference type="SUPFAM" id="SSF54171">
    <property type="entry name" value="DNA-binding domain"/>
    <property type="match status" value="1"/>
</dbReference>
<dbReference type="PROSITE" id="PS51032">
    <property type="entry name" value="AP2_ERF"/>
    <property type="match status" value="1"/>
</dbReference>